<dbReference type="EC" id="2.1.1.192" evidence="1"/>
<dbReference type="EMBL" id="CP000114">
    <property type="protein sequence ID" value="ABA44695.1"/>
    <property type="molecule type" value="Genomic_DNA"/>
</dbReference>
<dbReference type="RefSeq" id="WP_001124995.1">
    <property type="nucleotide sequence ID" value="NC_007432.1"/>
</dbReference>
<dbReference type="SMR" id="Q3K2R2"/>
<dbReference type="KEGG" id="sak:SAK_0559"/>
<dbReference type="HOGENOM" id="CLU_029101_0_1_9"/>
<dbReference type="GO" id="GO:0005737">
    <property type="term" value="C:cytoplasm"/>
    <property type="evidence" value="ECO:0007669"/>
    <property type="project" value="UniProtKB-SubCell"/>
</dbReference>
<dbReference type="GO" id="GO:0051539">
    <property type="term" value="F:4 iron, 4 sulfur cluster binding"/>
    <property type="evidence" value="ECO:0007669"/>
    <property type="project" value="UniProtKB-UniRule"/>
</dbReference>
<dbReference type="GO" id="GO:0046872">
    <property type="term" value="F:metal ion binding"/>
    <property type="evidence" value="ECO:0007669"/>
    <property type="project" value="UniProtKB-KW"/>
</dbReference>
<dbReference type="GO" id="GO:0070040">
    <property type="term" value="F:rRNA (adenine(2503)-C2-)-methyltransferase activity"/>
    <property type="evidence" value="ECO:0007669"/>
    <property type="project" value="UniProtKB-UniRule"/>
</dbReference>
<dbReference type="GO" id="GO:0019843">
    <property type="term" value="F:rRNA binding"/>
    <property type="evidence" value="ECO:0007669"/>
    <property type="project" value="UniProtKB-UniRule"/>
</dbReference>
<dbReference type="GO" id="GO:0002935">
    <property type="term" value="F:tRNA (adenine(37)-C2)-methyltransferase activity"/>
    <property type="evidence" value="ECO:0007669"/>
    <property type="project" value="UniProtKB-UniRule"/>
</dbReference>
<dbReference type="GO" id="GO:0000049">
    <property type="term" value="F:tRNA binding"/>
    <property type="evidence" value="ECO:0007669"/>
    <property type="project" value="UniProtKB-UniRule"/>
</dbReference>
<dbReference type="GO" id="GO:0070475">
    <property type="term" value="P:rRNA base methylation"/>
    <property type="evidence" value="ECO:0007669"/>
    <property type="project" value="UniProtKB-UniRule"/>
</dbReference>
<dbReference type="GO" id="GO:0030488">
    <property type="term" value="P:tRNA methylation"/>
    <property type="evidence" value="ECO:0007669"/>
    <property type="project" value="UniProtKB-UniRule"/>
</dbReference>
<dbReference type="CDD" id="cd01335">
    <property type="entry name" value="Radical_SAM"/>
    <property type="match status" value="1"/>
</dbReference>
<dbReference type="FunFam" id="3.20.20.70:FF:000014">
    <property type="entry name" value="Probable dual-specificity RNA methyltransferase RlmN"/>
    <property type="match status" value="1"/>
</dbReference>
<dbReference type="Gene3D" id="1.10.150.530">
    <property type="match status" value="1"/>
</dbReference>
<dbReference type="Gene3D" id="3.20.20.70">
    <property type="entry name" value="Aldolase class I"/>
    <property type="match status" value="1"/>
</dbReference>
<dbReference type="HAMAP" id="MF_01849">
    <property type="entry name" value="RNA_methyltr_RlmN"/>
    <property type="match status" value="1"/>
</dbReference>
<dbReference type="InterPro" id="IPR013785">
    <property type="entry name" value="Aldolase_TIM"/>
</dbReference>
<dbReference type="InterPro" id="IPR040072">
    <property type="entry name" value="Methyltransferase_A"/>
</dbReference>
<dbReference type="InterPro" id="IPR048641">
    <property type="entry name" value="RlmN_N"/>
</dbReference>
<dbReference type="InterPro" id="IPR027492">
    <property type="entry name" value="RNA_MTrfase_RlmN"/>
</dbReference>
<dbReference type="InterPro" id="IPR004383">
    <property type="entry name" value="rRNA_lsu_MTrfase_RlmN/Cfr"/>
</dbReference>
<dbReference type="InterPro" id="IPR007197">
    <property type="entry name" value="rSAM"/>
</dbReference>
<dbReference type="NCBIfam" id="TIGR00048">
    <property type="entry name" value="rRNA_mod_RlmN"/>
    <property type="match status" value="1"/>
</dbReference>
<dbReference type="PANTHER" id="PTHR30544">
    <property type="entry name" value="23S RRNA METHYLTRANSFERASE"/>
    <property type="match status" value="1"/>
</dbReference>
<dbReference type="PANTHER" id="PTHR30544:SF5">
    <property type="entry name" value="RADICAL SAM CORE DOMAIN-CONTAINING PROTEIN"/>
    <property type="match status" value="1"/>
</dbReference>
<dbReference type="Pfam" id="PF04055">
    <property type="entry name" value="Radical_SAM"/>
    <property type="match status" value="1"/>
</dbReference>
<dbReference type="Pfam" id="PF21016">
    <property type="entry name" value="RlmN_N"/>
    <property type="match status" value="1"/>
</dbReference>
<dbReference type="PIRSF" id="PIRSF006004">
    <property type="entry name" value="CHP00048"/>
    <property type="match status" value="1"/>
</dbReference>
<dbReference type="SFLD" id="SFLDF00275">
    <property type="entry name" value="adenosine_C2_methyltransferase"/>
    <property type="match status" value="1"/>
</dbReference>
<dbReference type="SFLD" id="SFLDS00029">
    <property type="entry name" value="Radical_SAM"/>
    <property type="match status" value="1"/>
</dbReference>
<dbReference type="SUPFAM" id="SSF102114">
    <property type="entry name" value="Radical SAM enzymes"/>
    <property type="match status" value="1"/>
</dbReference>
<dbReference type="PROSITE" id="PS51918">
    <property type="entry name" value="RADICAL_SAM"/>
    <property type="match status" value="1"/>
</dbReference>
<accession>Q3K2R2</accession>
<evidence type="ECO:0000255" key="1">
    <source>
        <dbReference type="HAMAP-Rule" id="MF_01849"/>
    </source>
</evidence>
<evidence type="ECO:0000255" key="2">
    <source>
        <dbReference type="PROSITE-ProRule" id="PRU01266"/>
    </source>
</evidence>
<comment type="function">
    <text evidence="1">Specifically methylates position 2 of adenine 2503 in 23S rRNA and position 2 of adenine 37 in tRNAs.</text>
</comment>
<comment type="catalytic activity">
    <reaction evidence="1">
        <text>adenosine(2503) in 23S rRNA + 2 reduced [2Fe-2S]-[ferredoxin] + 2 S-adenosyl-L-methionine = 2-methyladenosine(2503) in 23S rRNA + 5'-deoxyadenosine + L-methionine + 2 oxidized [2Fe-2S]-[ferredoxin] + S-adenosyl-L-homocysteine</text>
        <dbReference type="Rhea" id="RHEA:42916"/>
        <dbReference type="Rhea" id="RHEA-COMP:10000"/>
        <dbReference type="Rhea" id="RHEA-COMP:10001"/>
        <dbReference type="Rhea" id="RHEA-COMP:10152"/>
        <dbReference type="Rhea" id="RHEA-COMP:10282"/>
        <dbReference type="ChEBI" id="CHEBI:17319"/>
        <dbReference type="ChEBI" id="CHEBI:33737"/>
        <dbReference type="ChEBI" id="CHEBI:33738"/>
        <dbReference type="ChEBI" id="CHEBI:57844"/>
        <dbReference type="ChEBI" id="CHEBI:57856"/>
        <dbReference type="ChEBI" id="CHEBI:59789"/>
        <dbReference type="ChEBI" id="CHEBI:74411"/>
        <dbReference type="ChEBI" id="CHEBI:74497"/>
        <dbReference type="EC" id="2.1.1.192"/>
    </reaction>
</comment>
<comment type="catalytic activity">
    <reaction evidence="1">
        <text>adenosine(37) in tRNA + 2 reduced [2Fe-2S]-[ferredoxin] + 2 S-adenosyl-L-methionine = 2-methyladenosine(37) in tRNA + 5'-deoxyadenosine + L-methionine + 2 oxidized [2Fe-2S]-[ferredoxin] + S-adenosyl-L-homocysteine</text>
        <dbReference type="Rhea" id="RHEA:43332"/>
        <dbReference type="Rhea" id="RHEA-COMP:10000"/>
        <dbReference type="Rhea" id="RHEA-COMP:10001"/>
        <dbReference type="Rhea" id="RHEA-COMP:10162"/>
        <dbReference type="Rhea" id="RHEA-COMP:10485"/>
        <dbReference type="ChEBI" id="CHEBI:17319"/>
        <dbReference type="ChEBI" id="CHEBI:33737"/>
        <dbReference type="ChEBI" id="CHEBI:33738"/>
        <dbReference type="ChEBI" id="CHEBI:57844"/>
        <dbReference type="ChEBI" id="CHEBI:57856"/>
        <dbReference type="ChEBI" id="CHEBI:59789"/>
        <dbReference type="ChEBI" id="CHEBI:74411"/>
        <dbReference type="ChEBI" id="CHEBI:74497"/>
        <dbReference type="EC" id="2.1.1.192"/>
    </reaction>
</comment>
<comment type="cofactor">
    <cofactor evidence="1">
        <name>[4Fe-4S] cluster</name>
        <dbReference type="ChEBI" id="CHEBI:49883"/>
    </cofactor>
    <text evidence="1">Binds 1 [4Fe-4S] cluster. The cluster is coordinated with 3 cysteines and an exchangeable S-adenosyl-L-methionine.</text>
</comment>
<comment type="subcellular location">
    <subcellularLocation>
        <location evidence="1">Cytoplasm</location>
    </subcellularLocation>
</comment>
<comment type="miscellaneous">
    <text evidence="1">Reaction proceeds by a ping-pong mechanism involving intermediate methylation of a conserved cysteine residue.</text>
</comment>
<comment type="similarity">
    <text evidence="1">Belongs to the radical SAM superfamily. RlmN family.</text>
</comment>
<organism>
    <name type="scientific">Streptococcus agalactiae serotype Ia (strain ATCC 27591 / A909 / CDC SS700)</name>
    <dbReference type="NCBI Taxonomy" id="205921"/>
    <lineage>
        <taxon>Bacteria</taxon>
        <taxon>Bacillati</taxon>
        <taxon>Bacillota</taxon>
        <taxon>Bacilli</taxon>
        <taxon>Lactobacillales</taxon>
        <taxon>Streptococcaceae</taxon>
        <taxon>Streptococcus</taxon>
    </lineage>
</organism>
<gene>
    <name evidence="1" type="primary">rlmN</name>
    <name type="ordered locus">SAK_0559</name>
</gene>
<sequence length="368" mass="41995">MPKKTDTPDYKPSIYSLTRDELIAWAIEHGEKKFRASQIWDWLYKKRVQSFDEMTNISKDFIALLNENFVVNPLKQRIVQESADGTVKYLFELPDGMLIETVLMRQHYGLSVCVTTQVGCNIGCTFCASGLIKKQRDLNNGEITAQIMLVQKYFDERGQGERVSHIVVMGIGEPFDNYTNVLKFLRTVNDDNGLAIGARHITVSTSGLAHKIREFANEGVQVNLAVSLHAPNNELRSSIMRINRSFPLEKLFAAIEYYIETTNRRVTFEYIMLNGVNDTPENAQELADLTKKIRKLSYVNLIPYNPVSEHDQYSRSPKERVEAFYDVLKKNGVNCVVRQEHGTDIDAACGQLRSNTMKRDRQKAKVGQ</sequence>
<keyword id="KW-0004">4Fe-4S</keyword>
<keyword id="KW-0963">Cytoplasm</keyword>
<keyword id="KW-1015">Disulfide bond</keyword>
<keyword id="KW-0408">Iron</keyword>
<keyword id="KW-0411">Iron-sulfur</keyword>
<keyword id="KW-0479">Metal-binding</keyword>
<keyword id="KW-0489">Methyltransferase</keyword>
<keyword id="KW-0698">rRNA processing</keyword>
<keyword id="KW-0949">S-adenosyl-L-methionine</keyword>
<keyword id="KW-0808">Transferase</keyword>
<keyword id="KW-0819">tRNA processing</keyword>
<reference key="1">
    <citation type="journal article" date="2005" name="Proc. Natl. Acad. Sci. U.S.A.">
        <title>Genome analysis of multiple pathogenic isolates of Streptococcus agalactiae: implications for the microbial 'pan-genome'.</title>
        <authorList>
            <person name="Tettelin H."/>
            <person name="Masignani V."/>
            <person name="Cieslewicz M.J."/>
            <person name="Donati C."/>
            <person name="Medini D."/>
            <person name="Ward N.L."/>
            <person name="Angiuoli S.V."/>
            <person name="Crabtree J."/>
            <person name="Jones A.L."/>
            <person name="Durkin A.S."/>
            <person name="DeBoy R.T."/>
            <person name="Davidsen T.M."/>
            <person name="Mora M."/>
            <person name="Scarselli M."/>
            <person name="Margarit y Ros I."/>
            <person name="Peterson J.D."/>
            <person name="Hauser C.R."/>
            <person name="Sundaram J.P."/>
            <person name="Nelson W.C."/>
            <person name="Madupu R."/>
            <person name="Brinkac L.M."/>
            <person name="Dodson R.J."/>
            <person name="Rosovitz M.J."/>
            <person name="Sullivan S.A."/>
            <person name="Daugherty S.C."/>
            <person name="Haft D.H."/>
            <person name="Selengut J."/>
            <person name="Gwinn M.L."/>
            <person name="Zhou L."/>
            <person name="Zafar N."/>
            <person name="Khouri H."/>
            <person name="Radune D."/>
            <person name="Dimitrov G."/>
            <person name="Watkins K."/>
            <person name="O'Connor K.J."/>
            <person name="Smith S."/>
            <person name="Utterback T.R."/>
            <person name="White O."/>
            <person name="Rubens C.E."/>
            <person name="Grandi G."/>
            <person name="Madoff L.C."/>
            <person name="Kasper D.L."/>
            <person name="Telford J.L."/>
            <person name="Wessels M.R."/>
            <person name="Rappuoli R."/>
            <person name="Fraser C.M."/>
        </authorList>
    </citation>
    <scope>NUCLEOTIDE SEQUENCE [LARGE SCALE GENOMIC DNA]</scope>
    <source>
        <strain>ATCC 27591 / A909 / CDC SS700</strain>
    </source>
</reference>
<proteinExistence type="inferred from homology"/>
<protein>
    <recommendedName>
        <fullName evidence="1">Probable dual-specificity RNA methyltransferase RlmN</fullName>
        <ecNumber evidence="1">2.1.1.192</ecNumber>
    </recommendedName>
    <alternativeName>
        <fullName evidence="1">23S rRNA (adenine(2503)-C(2))-methyltransferase</fullName>
    </alternativeName>
    <alternativeName>
        <fullName evidence="1">23S rRNA m2A2503 methyltransferase</fullName>
    </alternativeName>
    <alternativeName>
        <fullName evidence="1">Ribosomal RNA large subunit methyltransferase N</fullName>
    </alternativeName>
    <alternativeName>
        <fullName evidence="1">tRNA (adenine(37)-C(2))-methyltransferase</fullName>
    </alternativeName>
    <alternativeName>
        <fullName evidence="1">tRNA m2A37 methyltransferase</fullName>
    </alternativeName>
</protein>
<name>RLMN_STRA1</name>
<feature type="chain" id="PRO_0000350448" description="Probable dual-specificity RNA methyltransferase RlmN">
    <location>
        <begin position="1"/>
        <end position="368"/>
    </location>
</feature>
<feature type="domain" description="Radical SAM core" evidence="2">
    <location>
        <begin position="106"/>
        <end position="344"/>
    </location>
</feature>
<feature type="active site" description="Proton acceptor" evidence="1">
    <location>
        <position position="100"/>
    </location>
</feature>
<feature type="active site" description="S-methylcysteine intermediate" evidence="1">
    <location>
        <position position="349"/>
    </location>
</feature>
<feature type="binding site" evidence="1">
    <location>
        <position position="120"/>
    </location>
    <ligand>
        <name>[4Fe-4S] cluster</name>
        <dbReference type="ChEBI" id="CHEBI:49883"/>
        <note>4Fe-4S-S-AdoMet</note>
    </ligand>
</feature>
<feature type="binding site" evidence="1">
    <location>
        <position position="124"/>
    </location>
    <ligand>
        <name>[4Fe-4S] cluster</name>
        <dbReference type="ChEBI" id="CHEBI:49883"/>
        <note>4Fe-4S-S-AdoMet</note>
    </ligand>
</feature>
<feature type="binding site" evidence="1">
    <location>
        <position position="127"/>
    </location>
    <ligand>
        <name>[4Fe-4S] cluster</name>
        <dbReference type="ChEBI" id="CHEBI:49883"/>
        <note>4Fe-4S-S-AdoMet</note>
    </ligand>
</feature>
<feature type="binding site" evidence="1">
    <location>
        <begin position="172"/>
        <end position="173"/>
    </location>
    <ligand>
        <name>S-adenosyl-L-methionine</name>
        <dbReference type="ChEBI" id="CHEBI:59789"/>
    </ligand>
</feature>
<feature type="binding site" evidence="1">
    <location>
        <position position="204"/>
    </location>
    <ligand>
        <name>S-adenosyl-L-methionine</name>
        <dbReference type="ChEBI" id="CHEBI:59789"/>
    </ligand>
</feature>
<feature type="binding site" evidence="1">
    <location>
        <begin position="227"/>
        <end position="229"/>
    </location>
    <ligand>
        <name>S-adenosyl-L-methionine</name>
        <dbReference type="ChEBI" id="CHEBI:59789"/>
    </ligand>
</feature>
<feature type="binding site" evidence="1">
    <location>
        <position position="305"/>
    </location>
    <ligand>
        <name>S-adenosyl-L-methionine</name>
        <dbReference type="ChEBI" id="CHEBI:59789"/>
    </ligand>
</feature>
<feature type="disulfide bond" description="(transient)" evidence="1">
    <location>
        <begin position="113"/>
        <end position="349"/>
    </location>
</feature>